<protein>
    <recommendedName>
        <fullName>Protein I</fullName>
    </recommendedName>
    <alternativeName>
        <fullName>Accessory protein N2</fullName>
    </alternativeName>
    <alternativeName>
        <fullName>N internal ORF protein</fullName>
        <shortName>IORF</shortName>
    </alternativeName>
    <alternativeName>
        <fullName>Protein in nucleocapsid ORF</fullName>
    </alternativeName>
</protein>
<proteinExistence type="inferred from homology"/>
<organismHost>
    <name type="scientific">Bos taurus</name>
    <name type="common">Bovine</name>
    <dbReference type="NCBI Taxonomy" id="9913"/>
</organismHost>
<organism>
    <name type="scientific">Bovine coronavirus (strain 98TXSF-110-ENT)</name>
    <name type="common">BCoV-ENT</name>
    <name type="synonym">BCV</name>
    <dbReference type="NCBI Taxonomy" id="233262"/>
    <lineage>
        <taxon>Viruses</taxon>
        <taxon>Riboviria</taxon>
        <taxon>Orthornavirae</taxon>
        <taxon>Pisuviricota</taxon>
        <taxon>Pisoniviricetes</taxon>
        <taxon>Nidovirales</taxon>
        <taxon>Cornidovirineae</taxon>
        <taxon>Coronaviridae</taxon>
        <taxon>Orthocoronavirinae</taxon>
        <taxon>Betacoronavirus</taxon>
        <taxon>Embecovirus</taxon>
        <taxon>Betacoronavirus 1</taxon>
    </lineage>
</organism>
<dbReference type="EMBL" id="AF391541">
    <property type="protein sequence ID" value="AAK83363.1"/>
    <property type="molecule type" value="Genomic_RNA"/>
</dbReference>
<dbReference type="RefSeq" id="NP_150084.1">
    <property type="nucleotide sequence ID" value="NC_003045.1"/>
</dbReference>
<dbReference type="GeneID" id="921687"/>
<dbReference type="Proteomes" id="UP000008570">
    <property type="component" value="Segment"/>
</dbReference>
<dbReference type="GO" id="GO:0044423">
    <property type="term" value="C:virion component"/>
    <property type="evidence" value="ECO:0007669"/>
    <property type="project" value="UniProtKB-KW"/>
</dbReference>
<dbReference type="CDD" id="cd21662">
    <property type="entry name" value="embe-CoV_Protein-I_like"/>
    <property type="match status" value="1"/>
</dbReference>
<dbReference type="InterPro" id="IPR004876">
    <property type="entry name" value="Corona_nucI"/>
</dbReference>
<dbReference type="InterPro" id="IPR044311">
    <property type="entry name" value="N2-like_embe-CoV"/>
</dbReference>
<dbReference type="Pfam" id="PF03187">
    <property type="entry name" value="Corona_I"/>
    <property type="match status" value="1"/>
</dbReference>
<feature type="chain" id="PRO_0000284093" description="Protein I">
    <location>
        <begin position="1"/>
        <end position="207"/>
    </location>
</feature>
<keyword id="KW-0946">Virion</keyword>
<comment type="function">
    <text evidence="1">Structural protein that is not essential for the viral replication either in tissue culture or in its natural host.</text>
</comment>
<comment type="subcellular location">
    <subcellularLocation>
        <location evidence="1">Virion</location>
    </subcellularLocation>
</comment>
<comment type="miscellaneous">
    <text>The gene encoding this protein is included within the N gene (alternative ORF).</text>
</comment>
<comment type="similarity">
    <text evidence="2">Belongs to the coronavirus I protein family.</text>
</comment>
<name>IORF_CVBEN</name>
<gene>
    <name type="primary">N</name>
    <name type="synonym">I</name>
    <name type="ORF">7b</name>
</gene>
<reference key="1">
    <citation type="journal article" date="2001" name="J. Gen. Virol.">
        <title>Comparison of genomic and predicted amino acid sequences of respiratory and enteric bovine coronaviruses isolated from the same animal with fatal shipping pneumonia.</title>
        <authorList>
            <person name="Chouljenko V.N."/>
            <person name="Lin X.Q."/>
            <person name="Storz J."/>
            <person name="Kousoulas K.G."/>
            <person name="Gorbalenya A.E."/>
        </authorList>
    </citation>
    <scope>NUCLEOTIDE SEQUENCE [GENOMIC RNA]</scope>
</reference>
<sequence length="207" mass="23063">MASLSGPISPTNLEMFKPGVEELNPSKLLLLSNHQEGMLYPTILGSLELLSFKRERSLNLQRDKVCLLHQESQLLKLRGTGTDTTDVPLKQPMATSVNCYHDGIFTILEQDRMPKTSMAPTLTESTGSLVTRLMSIPRLTFSIGTQVAMRLFRLGFRLARYSLRVTILKAQEGLLLIPDLLHAHPVEPLVQDRAVEPILAIEPLPLV</sequence>
<evidence type="ECO:0000250" key="1"/>
<evidence type="ECO:0000305" key="2"/>
<accession>Q91A21</accession>